<proteinExistence type="inferred from homology"/>
<evidence type="ECO:0000255" key="1">
    <source>
        <dbReference type="HAMAP-Rule" id="MF_00109"/>
    </source>
</evidence>
<accession>A4X608</accession>
<protein>
    <recommendedName>
        <fullName evidence="1">Shikimate kinase</fullName>
        <shortName evidence="1">SK</shortName>
        <ecNumber evidence="1">2.7.1.71</ecNumber>
    </recommendedName>
</protein>
<gene>
    <name evidence="1" type="primary">aroK</name>
    <name type="ordered locus">Strop_1846</name>
</gene>
<comment type="function">
    <text evidence="1">Catalyzes the specific phosphorylation of the 3-hydroxyl group of shikimic acid using ATP as a cosubstrate.</text>
</comment>
<comment type="catalytic activity">
    <reaction evidence="1">
        <text>shikimate + ATP = 3-phosphoshikimate + ADP + H(+)</text>
        <dbReference type="Rhea" id="RHEA:13121"/>
        <dbReference type="ChEBI" id="CHEBI:15378"/>
        <dbReference type="ChEBI" id="CHEBI:30616"/>
        <dbReference type="ChEBI" id="CHEBI:36208"/>
        <dbReference type="ChEBI" id="CHEBI:145989"/>
        <dbReference type="ChEBI" id="CHEBI:456216"/>
        <dbReference type="EC" id="2.7.1.71"/>
    </reaction>
</comment>
<comment type="cofactor">
    <cofactor evidence="1">
        <name>Mg(2+)</name>
        <dbReference type="ChEBI" id="CHEBI:18420"/>
    </cofactor>
    <text evidence="1">Binds 1 Mg(2+) ion per subunit.</text>
</comment>
<comment type="pathway">
    <text evidence="1">Metabolic intermediate biosynthesis; chorismate biosynthesis; chorismate from D-erythrose 4-phosphate and phosphoenolpyruvate: step 5/7.</text>
</comment>
<comment type="subunit">
    <text evidence="1">Monomer.</text>
</comment>
<comment type="subcellular location">
    <subcellularLocation>
        <location evidence="1">Cytoplasm</location>
    </subcellularLocation>
</comment>
<comment type="similarity">
    <text evidence="1">Belongs to the shikimate kinase family.</text>
</comment>
<name>AROK_SALTO</name>
<dbReference type="EC" id="2.7.1.71" evidence="1"/>
<dbReference type="EMBL" id="CP000667">
    <property type="protein sequence ID" value="ABP54308.1"/>
    <property type="molecule type" value="Genomic_DNA"/>
</dbReference>
<dbReference type="RefSeq" id="WP_011905739.1">
    <property type="nucleotide sequence ID" value="NC_009380.1"/>
</dbReference>
<dbReference type="SMR" id="A4X608"/>
<dbReference type="STRING" id="369723.Strop_1846"/>
<dbReference type="KEGG" id="stp:Strop_1846"/>
<dbReference type="PATRIC" id="fig|369723.5.peg.1894"/>
<dbReference type="eggNOG" id="COG0703">
    <property type="taxonomic scope" value="Bacteria"/>
</dbReference>
<dbReference type="HOGENOM" id="CLU_057607_3_3_11"/>
<dbReference type="UniPathway" id="UPA00053">
    <property type="reaction ID" value="UER00088"/>
</dbReference>
<dbReference type="Proteomes" id="UP000000235">
    <property type="component" value="Chromosome"/>
</dbReference>
<dbReference type="GO" id="GO:0005829">
    <property type="term" value="C:cytosol"/>
    <property type="evidence" value="ECO:0007669"/>
    <property type="project" value="TreeGrafter"/>
</dbReference>
<dbReference type="GO" id="GO:0005524">
    <property type="term" value="F:ATP binding"/>
    <property type="evidence" value="ECO:0007669"/>
    <property type="project" value="UniProtKB-UniRule"/>
</dbReference>
<dbReference type="GO" id="GO:0000287">
    <property type="term" value="F:magnesium ion binding"/>
    <property type="evidence" value="ECO:0007669"/>
    <property type="project" value="UniProtKB-UniRule"/>
</dbReference>
<dbReference type="GO" id="GO:0004765">
    <property type="term" value="F:shikimate kinase activity"/>
    <property type="evidence" value="ECO:0007669"/>
    <property type="project" value="UniProtKB-UniRule"/>
</dbReference>
<dbReference type="GO" id="GO:0008652">
    <property type="term" value="P:amino acid biosynthetic process"/>
    <property type="evidence" value="ECO:0007669"/>
    <property type="project" value="UniProtKB-KW"/>
</dbReference>
<dbReference type="GO" id="GO:0009073">
    <property type="term" value="P:aromatic amino acid family biosynthetic process"/>
    <property type="evidence" value="ECO:0007669"/>
    <property type="project" value="UniProtKB-KW"/>
</dbReference>
<dbReference type="GO" id="GO:0009423">
    <property type="term" value="P:chorismate biosynthetic process"/>
    <property type="evidence" value="ECO:0007669"/>
    <property type="project" value="UniProtKB-UniRule"/>
</dbReference>
<dbReference type="CDD" id="cd00464">
    <property type="entry name" value="SK"/>
    <property type="match status" value="1"/>
</dbReference>
<dbReference type="Gene3D" id="3.40.50.300">
    <property type="entry name" value="P-loop containing nucleotide triphosphate hydrolases"/>
    <property type="match status" value="1"/>
</dbReference>
<dbReference type="HAMAP" id="MF_00109">
    <property type="entry name" value="Shikimate_kinase"/>
    <property type="match status" value="1"/>
</dbReference>
<dbReference type="InterPro" id="IPR027417">
    <property type="entry name" value="P-loop_NTPase"/>
</dbReference>
<dbReference type="InterPro" id="IPR031322">
    <property type="entry name" value="Shikimate/glucono_kinase"/>
</dbReference>
<dbReference type="InterPro" id="IPR000623">
    <property type="entry name" value="Shikimate_kinase/TSH1"/>
</dbReference>
<dbReference type="InterPro" id="IPR023000">
    <property type="entry name" value="Shikimate_kinase_CS"/>
</dbReference>
<dbReference type="PANTHER" id="PTHR21087">
    <property type="entry name" value="SHIKIMATE KINASE"/>
    <property type="match status" value="1"/>
</dbReference>
<dbReference type="PANTHER" id="PTHR21087:SF16">
    <property type="entry name" value="SHIKIMATE KINASE 1, CHLOROPLASTIC"/>
    <property type="match status" value="1"/>
</dbReference>
<dbReference type="Pfam" id="PF01202">
    <property type="entry name" value="SKI"/>
    <property type="match status" value="1"/>
</dbReference>
<dbReference type="PRINTS" id="PR01100">
    <property type="entry name" value="SHIKIMTKNASE"/>
</dbReference>
<dbReference type="SUPFAM" id="SSF52540">
    <property type="entry name" value="P-loop containing nucleoside triphosphate hydrolases"/>
    <property type="match status" value="1"/>
</dbReference>
<dbReference type="PROSITE" id="PS01128">
    <property type="entry name" value="SHIKIMATE_KINASE"/>
    <property type="match status" value="1"/>
</dbReference>
<reference key="1">
    <citation type="journal article" date="2007" name="Proc. Natl. Acad. Sci. U.S.A.">
        <title>Genome sequencing reveals complex secondary metabolome in the marine actinomycete Salinispora tropica.</title>
        <authorList>
            <person name="Udwary D.W."/>
            <person name="Zeigler L."/>
            <person name="Asolkar R.N."/>
            <person name="Singan V."/>
            <person name="Lapidus A."/>
            <person name="Fenical W."/>
            <person name="Jensen P.R."/>
            <person name="Moore B.S."/>
        </authorList>
    </citation>
    <scope>NUCLEOTIDE SEQUENCE [LARGE SCALE GENOMIC DNA]</scope>
    <source>
        <strain>ATCC BAA-916 / DSM 44818 / JCM 13857 / NBRC 105044 / CNB-440</strain>
    </source>
</reference>
<keyword id="KW-0028">Amino-acid biosynthesis</keyword>
<keyword id="KW-0057">Aromatic amino acid biosynthesis</keyword>
<keyword id="KW-0067">ATP-binding</keyword>
<keyword id="KW-0963">Cytoplasm</keyword>
<keyword id="KW-0418">Kinase</keyword>
<keyword id="KW-0460">Magnesium</keyword>
<keyword id="KW-0479">Metal-binding</keyword>
<keyword id="KW-0547">Nucleotide-binding</keyword>
<keyword id="KW-1185">Reference proteome</keyword>
<keyword id="KW-0808">Transferase</keyword>
<organism>
    <name type="scientific">Salinispora tropica (strain ATCC BAA-916 / DSM 44818 / JCM 13857 / NBRC 105044 / CNB-440)</name>
    <dbReference type="NCBI Taxonomy" id="369723"/>
    <lineage>
        <taxon>Bacteria</taxon>
        <taxon>Bacillati</taxon>
        <taxon>Actinomycetota</taxon>
        <taxon>Actinomycetes</taxon>
        <taxon>Micromonosporales</taxon>
        <taxon>Micromonosporaceae</taxon>
        <taxon>Salinispora</taxon>
    </lineage>
</organism>
<sequence length="167" mass="17249">MAPVCVLVGAPGSGKTTVGRALAELLGVEFRDTDLDIEATVGKPISEIFIDEGEAHFRTLERAAVATALATTAGVLALGGGAVLAEETRSALVGHTVVHLSVELPDAVRRVGLGAGRPLLAVNPRATLKYLLEQRRPHYAAVATATVVTDGRTPEQLAVEVAALLPS</sequence>
<feature type="chain" id="PRO_1000094412" description="Shikimate kinase">
    <location>
        <begin position="1"/>
        <end position="167"/>
    </location>
</feature>
<feature type="binding site" evidence="1">
    <location>
        <begin position="12"/>
        <end position="17"/>
    </location>
    <ligand>
        <name>ATP</name>
        <dbReference type="ChEBI" id="CHEBI:30616"/>
    </ligand>
</feature>
<feature type="binding site" evidence="1">
    <location>
        <position position="16"/>
    </location>
    <ligand>
        <name>Mg(2+)</name>
        <dbReference type="ChEBI" id="CHEBI:18420"/>
    </ligand>
</feature>
<feature type="binding site" evidence="1">
    <location>
        <position position="34"/>
    </location>
    <ligand>
        <name>substrate</name>
    </ligand>
</feature>
<feature type="binding site" evidence="1">
    <location>
        <position position="58"/>
    </location>
    <ligand>
        <name>substrate</name>
    </ligand>
</feature>
<feature type="binding site" evidence="1">
    <location>
        <position position="80"/>
    </location>
    <ligand>
        <name>substrate</name>
    </ligand>
</feature>
<feature type="binding site" evidence="1">
    <location>
        <position position="117"/>
    </location>
    <ligand>
        <name>ATP</name>
        <dbReference type="ChEBI" id="CHEBI:30616"/>
    </ligand>
</feature>
<feature type="binding site" evidence="1">
    <location>
        <position position="135"/>
    </location>
    <ligand>
        <name>substrate</name>
    </ligand>
</feature>
<feature type="binding site" evidence="1">
    <location>
        <position position="152"/>
    </location>
    <ligand>
        <name>ATP</name>
        <dbReference type="ChEBI" id="CHEBI:30616"/>
    </ligand>
</feature>